<protein>
    <recommendedName>
        <fullName evidence="1">7-cyano-7-deazaguanine synthase</fullName>
        <ecNumber evidence="1">6.3.4.20</ecNumber>
    </recommendedName>
    <alternativeName>
        <fullName evidence="1">7-cyano-7-carbaguanine synthase</fullName>
    </alternativeName>
    <alternativeName>
        <fullName evidence="1">PreQ(0) synthase</fullName>
    </alternativeName>
    <alternativeName>
        <fullName evidence="1">Queuosine biosynthesis protein QueC</fullName>
    </alternativeName>
</protein>
<organism>
    <name type="scientific">Marinobacter nauticus (strain ATCC 700491 / DSM 11845 / VT8)</name>
    <name type="common">Marinobacter aquaeolei</name>
    <dbReference type="NCBI Taxonomy" id="351348"/>
    <lineage>
        <taxon>Bacteria</taxon>
        <taxon>Pseudomonadati</taxon>
        <taxon>Pseudomonadota</taxon>
        <taxon>Gammaproteobacteria</taxon>
        <taxon>Pseudomonadales</taxon>
        <taxon>Marinobacteraceae</taxon>
        <taxon>Marinobacter</taxon>
    </lineage>
</organism>
<name>QUEC_MARN8</name>
<accession>A1TWU4</accession>
<keyword id="KW-0067">ATP-binding</keyword>
<keyword id="KW-0436">Ligase</keyword>
<keyword id="KW-0479">Metal-binding</keyword>
<keyword id="KW-0547">Nucleotide-binding</keyword>
<keyword id="KW-0671">Queuosine biosynthesis</keyword>
<keyword id="KW-0862">Zinc</keyword>
<evidence type="ECO:0000255" key="1">
    <source>
        <dbReference type="HAMAP-Rule" id="MF_01633"/>
    </source>
</evidence>
<gene>
    <name evidence="1" type="primary">queC</name>
    <name type="ordered locus">Maqu_0106</name>
</gene>
<dbReference type="EC" id="6.3.4.20" evidence="1"/>
<dbReference type="EMBL" id="CP000514">
    <property type="protein sequence ID" value="ABM17213.1"/>
    <property type="molecule type" value="Genomic_DNA"/>
</dbReference>
<dbReference type="RefSeq" id="WP_011783686.1">
    <property type="nucleotide sequence ID" value="NC_008740.1"/>
</dbReference>
<dbReference type="SMR" id="A1TWU4"/>
<dbReference type="STRING" id="351348.Maqu_0106"/>
<dbReference type="KEGG" id="maq:Maqu_0106"/>
<dbReference type="eggNOG" id="COG0603">
    <property type="taxonomic scope" value="Bacteria"/>
</dbReference>
<dbReference type="HOGENOM" id="CLU_081854_1_0_6"/>
<dbReference type="OrthoDB" id="9789567at2"/>
<dbReference type="UniPathway" id="UPA00391"/>
<dbReference type="Proteomes" id="UP000000998">
    <property type="component" value="Chromosome"/>
</dbReference>
<dbReference type="GO" id="GO:0005524">
    <property type="term" value="F:ATP binding"/>
    <property type="evidence" value="ECO:0007669"/>
    <property type="project" value="UniProtKB-UniRule"/>
</dbReference>
<dbReference type="GO" id="GO:0016879">
    <property type="term" value="F:ligase activity, forming carbon-nitrogen bonds"/>
    <property type="evidence" value="ECO:0007669"/>
    <property type="project" value="UniProtKB-UniRule"/>
</dbReference>
<dbReference type="GO" id="GO:0008270">
    <property type="term" value="F:zinc ion binding"/>
    <property type="evidence" value="ECO:0007669"/>
    <property type="project" value="UniProtKB-UniRule"/>
</dbReference>
<dbReference type="GO" id="GO:0008616">
    <property type="term" value="P:queuosine biosynthetic process"/>
    <property type="evidence" value="ECO:0007669"/>
    <property type="project" value="UniProtKB-UniRule"/>
</dbReference>
<dbReference type="CDD" id="cd01995">
    <property type="entry name" value="QueC-like"/>
    <property type="match status" value="1"/>
</dbReference>
<dbReference type="Gene3D" id="3.40.50.620">
    <property type="entry name" value="HUPs"/>
    <property type="match status" value="1"/>
</dbReference>
<dbReference type="HAMAP" id="MF_01633">
    <property type="entry name" value="QueC"/>
    <property type="match status" value="1"/>
</dbReference>
<dbReference type="InterPro" id="IPR018317">
    <property type="entry name" value="QueC"/>
</dbReference>
<dbReference type="InterPro" id="IPR014729">
    <property type="entry name" value="Rossmann-like_a/b/a_fold"/>
</dbReference>
<dbReference type="NCBIfam" id="TIGR00364">
    <property type="entry name" value="7-cyano-7-deazaguanine synthase QueC"/>
    <property type="match status" value="1"/>
</dbReference>
<dbReference type="PANTHER" id="PTHR42914">
    <property type="entry name" value="7-CYANO-7-DEAZAGUANINE SYNTHASE"/>
    <property type="match status" value="1"/>
</dbReference>
<dbReference type="PANTHER" id="PTHR42914:SF1">
    <property type="entry name" value="7-CYANO-7-DEAZAGUANINE SYNTHASE"/>
    <property type="match status" value="1"/>
</dbReference>
<dbReference type="Pfam" id="PF06508">
    <property type="entry name" value="QueC"/>
    <property type="match status" value="1"/>
</dbReference>
<dbReference type="PIRSF" id="PIRSF006293">
    <property type="entry name" value="ExsB"/>
    <property type="match status" value="1"/>
</dbReference>
<dbReference type="SUPFAM" id="SSF52402">
    <property type="entry name" value="Adenine nucleotide alpha hydrolases-like"/>
    <property type="match status" value="1"/>
</dbReference>
<proteinExistence type="inferred from homology"/>
<feature type="chain" id="PRO_0000336922" description="7-cyano-7-deazaguanine synthase">
    <location>
        <begin position="1"/>
        <end position="221"/>
    </location>
</feature>
<feature type="binding site" evidence="1">
    <location>
        <begin position="9"/>
        <end position="19"/>
    </location>
    <ligand>
        <name>ATP</name>
        <dbReference type="ChEBI" id="CHEBI:30616"/>
    </ligand>
</feature>
<feature type="binding site" evidence="1">
    <location>
        <position position="185"/>
    </location>
    <ligand>
        <name>Zn(2+)</name>
        <dbReference type="ChEBI" id="CHEBI:29105"/>
    </ligand>
</feature>
<feature type="binding site" evidence="1">
    <location>
        <position position="193"/>
    </location>
    <ligand>
        <name>Zn(2+)</name>
        <dbReference type="ChEBI" id="CHEBI:29105"/>
    </ligand>
</feature>
<feature type="binding site" evidence="1">
    <location>
        <position position="196"/>
    </location>
    <ligand>
        <name>Zn(2+)</name>
        <dbReference type="ChEBI" id="CHEBI:29105"/>
    </ligand>
</feature>
<feature type="binding site" evidence="1">
    <location>
        <position position="199"/>
    </location>
    <ligand>
        <name>Zn(2+)</name>
        <dbReference type="ChEBI" id="CHEBI:29105"/>
    </ligand>
</feature>
<reference key="1">
    <citation type="journal article" date="2011" name="Appl. Environ. Microbiol.">
        <title>Genomic potential of Marinobacter aquaeolei, a biogeochemical 'opportunitroph'.</title>
        <authorList>
            <person name="Singer E."/>
            <person name="Webb E.A."/>
            <person name="Nelson W.C."/>
            <person name="Heidelberg J.F."/>
            <person name="Ivanova N."/>
            <person name="Pati A."/>
            <person name="Edwards K.J."/>
        </authorList>
    </citation>
    <scope>NUCLEOTIDE SEQUENCE [LARGE SCALE GENOMIC DNA]</scope>
    <source>
        <strain>ATCC 700491 / DSM 11845 / VT8</strain>
    </source>
</reference>
<sequence>MTDSVVVIYSGGMDSFTLLHLARARGLKVHALSFNYGQRHVRELDVAADVCRAEGIPHKVIDIRAMSEVMSGSSLTSDIEVPEGHYEEDTMKATVVPNRNMILLSLATGYAVTTGAGAVWYGAHGGDHAIYPDCRPEFVEKMDAVCRVANYEPVGIEAPFMAMDKGQILAEGLKLGLDYSQTWTCYNGRDKACGRCGSCVERLEAFAANGVTDPLAYERLA</sequence>
<comment type="function">
    <text evidence="1">Catalyzes the ATP-dependent conversion of 7-carboxy-7-deazaguanine (CDG) to 7-cyano-7-deazaguanine (preQ(0)).</text>
</comment>
<comment type="catalytic activity">
    <reaction evidence="1">
        <text>7-carboxy-7-deazaguanine + NH4(+) + ATP = 7-cyano-7-deazaguanine + ADP + phosphate + H2O + H(+)</text>
        <dbReference type="Rhea" id="RHEA:27982"/>
        <dbReference type="ChEBI" id="CHEBI:15377"/>
        <dbReference type="ChEBI" id="CHEBI:15378"/>
        <dbReference type="ChEBI" id="CHEBI:28938"/>
        <dbReference type="ChEBI" id="CHEBI:30616"/>
        <dbReference type="ChEBI" id="CHEBI:43474"/>
        <dbReference type="ChEBI" id="CHEBI:45075"/>
        <dbReference type="ChEBI" id="CHEBI:61036"/>
        <dbReference type="ChEBI" id="CHEBI:456216"/>
        <dbReference type="EC" id="6.3.4.20"/>
    </reaction>
</comment>
<comment type="cofactor">
    <cofactor evidence="1">
        <name>Zn(2+)</name>
        <dbReference type="ChEBI" id="CHEBI:29105"/>
    </cofactor>
    <text evidence="1">Binds 1 zinc ion per subunit.</text>
</comment>
<comment type="pathway">
    <text evidence="1">Purine metabolism; 7-cyano-7-deazaguanine biosynthesis.</text>
</comment>
<comment type="similarity">
    <text evidence="1">Belongs to the QueC family.</text>
</comment>